<sequence>MSHPALTQLRALRYFKEIPALDPQLLDWLLLEDSMTKRFEQQGKTVSVTMIREGFVEQNEIPEELPLLPKESRYWLREILLCADGEPWLAGRTVVPVSTLSGPELALQKLGKTPLGRYLFTSSTLTRDFIEIGRDAGLWGRRSRLRLSGKPLLLTELFLPASPLY</sequence>
<proteinExistence type="inferred from homology"/>
<comment type="function">
    <text evidence="1">Removes the pyruvyl group from chorismate, with concomitant aromatization of the ring, to provide 4-hydroxybenzoate (4HB) for the ubiquinone pathway.</text>
</comment>
<comment type="catalytic activity">
    <reaction evidence="1">
        <text>chorismate = 4-hydroxybenzoate + pyruvate</text>
        <dbReference type="Rhea" id="RHEA:16505"/>
        <dbReference type="ChEBI" id="CHEBI:15361"/>
        <dbReference type="ChEBI" id="CHEBI:17879"/>
        <dbReference type="ChEBI" id="CHEBI:29748"/>
        <dbReference type="EC" id="4.1.3.40"/>
    </reaction>
</comment>
<comment type="pathway">
    <text evidence="1">Cofactor biosynthesis; ubiquinone biosynthesis.</text>
</comment>
<comment type="subunit">
    <text evidence="1">Monomer.</text>
</comment>
<comment type="subcellular location">
    <subcellularLocation>
        <location evidence="1">Cytoplasm</location>
    </subcellularLocation>
</comment>
<comment type="similarity">
    <text evidence="1">Belongs to the UbiC family.</text>
</comment>
<comment type="sequence caution" evidence="2">
    <conflict type="erroneous initiation">
        <sequence resource="EMBL-CDS" id="ABF06159"/>
    </conflict>
    <text>Extended N-terminus.</text>
</comment>
<keyword id="KW-0963">Cytoplasm</keyword>
<keyword id="KW-0456">Lyase</keyword>
<keyword id="KW-0670">Pyruvate</keyword>
<keyword id="KW-0831">Ubiquinone biosynthesis</keyword>
<reference key="1">
    <citation type="journal article" date="2006" name="BMC Genomics">
        <title>Complete genome sequence of Shigella flexneri 5b and comparison with Shigella flexneri 2a.</title>
        <authorList>
            <person name="Nie H."/>
            <person name="Yang F."/>
            <person name="Zhang X."/>
            <person name="Yang J."/>
            <person name="Chen L."/>
            <person name="Wang J."/>
            <person name="Xiong Z."/>
            <person name="Peng J."/>
            <person name="Sun L."/>
            <person name="Dong J."/>
            <person name="Xue Y."/>
            <person name="Xu X."/>
            <person name="Chen S."/>
            <person name="Yao Z."/>
            <person name="Shen Y."/>
            <person name="Jin Q."/>
        </authorList>
    </citation>
    <scope>NUCLEOTIDE SEQUENCE [LARGE SCALE GENOMIC DNA]</scope>
    <source>
        <strain>8401</strain>
    </source>
</reference>
<feature type="chain" id="PRO_0000292084" description="Chorismate pyruvate-lyase">
    <location>
        <begin position="1"/>
        <end position="165"/>
    </location>
</feature>
<feature type="binding site" evidence="1">
    <location>
        <position position="35"/>
    </location>
    <ligand>
        <name>substrate</name>
    </ligand>
</feature>
<feature type="binding site" evidence="1">
    <location>
        <position position="77"/>
    </location>
    <ligand>
        <name>substrate</name>
    </ligand>
</feature>
<feature type="binding site" evidence="1">
    <location>
        <position position="115"/>
    </location>
    <ligand>
        <name>substrate</name>
    </ligand>
</feature>
<feature type="binding site" evidence="1">
    <location>
        <position position="156"/>
    </location>
    <ligand>
        <name>substrate</name>
    </ligand>
</feature>
<dbReference type="EC" id="4.1.3.40" evidence="1"/>
<dbReference type="EMBL" id="CP000266">
    <property type="protein sequence ID" value="ABF06159.1"/>
    <property type="status" value="ALT_INIT"/>
    <property type="molecule type" value="Genomic_DNA"/>
</dbReference>
<dbReference type="RefSeq" id="WP_001295693.1">
    <property type="nucleotide sequence ID" value="NC_008258.1"/>
</dbReference>
<dbReference type="SMR" id="Q0SXQ6"/>
<dbReference type="KEGG" id="sfv:SFV_4174"/>
<dbReference type="HOGENOM" id="CLU_096824_1_0_6"/>
<dbReference type="UniPathway" id="UPA00232"/>
<dbReference type="Proteomes" id="UP000000659">
    <property type="component" value="Chromosome"/>
</dbReference>
<dbReference type="GO" id="GO:0005829">
    <property type="term" value="C:cytosol"/>
    <property type="evidence" value="ECO:0007669"/>
    <property type="project" value="TreeGrafter"/>
</dbReference>
<dbReference type="GO" id="GO:0008813">
    <property type="term" value="F:chorismate lyase activity"/>
    <property type="evidence" value="ECO:0007669"/>
    <property type="project" value="UniProtKB-UniRule"/>
</dbReference>
<dbReference type="GO" id="GO:0042866">
    <property type="term" value="P:pyruvate biosynthetic process"/>
    <property type="evidence" value="ECO:0007669"/>
    <property type="project" value="UniProtKB-UniRule"/>
</dbReference>
<dbReference type="GO" id="GO:0006744">
    <property type="term" value="P:ubiquinone biosynthetic process"/>
    <property type="evidence" value="ECO:0007669"/>
    <property type="project" value="UniProtKB-UniRule"/>
</dbReference>
<dbReference type="FunFam" id="3.40.1410.10:FF:000002">
    <property type="entry name" value="Chorismate pyruvate-lyase"/>
    <property type="match status" value="1"/>
</dbReference>
<dbReference type="Gene3D" id="3.40.1410.10">
    <property type="entry name" value="Chorismate lyase-like"/>
    <property type="match status" value="1"/>
</dbReference>
<dbReference type="HAMAP" id="MF_01632">
    <property type="entry name" value="UbiC"/>
    <property type="match status" value="1"/>
</dbReference>
<dbReference type="InterPro" id="IPR007440">
    <property type="entry name" value="Chorismate--pyruvate_lyase"/>
</dbReference>
<dbReference type="InterPro" id="IPR028978">
    <property type="entry name" value="Chorismate_lyase_/UTRA_dom_sf"/>
</dbReference>
<dbReference type="NCBIfam" id="NF008656">
    <property type="entry name" value="PRK11655.1"/>
    <property type="match status" value="1"/>
</dbReference>
<dbReference type="PANTHER" id="PTHR38683">
    <property type="entry name" value="CHORISMATE PYRUVATE-LYASE"/>
    <property type="match status" value="1"/>
</dbReference>
<dbReference type="PANTHER" id="PTHR38683:SF1">
    <property type="entry name" value="CHORISMATE PYRUVATE-LYASE"/>
    <property type="match status" value="1"/>
</dbReference>
<dbReference type="Pfam" id="PF04345">
    <property type="entry name" value="Chor_lyase"/>
    <property type="match status" value="1"/>
</dbReference>
<dbReference type="SUPFAM" id="SSF64288">
    <property type="entry name" value="Chorismate lyase-like"/>
    <property type="match status" value="1"/>
</dbReference>
<name>UBIC_SHIF8</name>
<evidence type="ECO:0000255" key="1">
    <source>
        <dbReference type="HAMAP-Rule" id="MF_01632"/>
    </source>
</evidence>
<evidence type="ECO:0000305" key="2"/>
<gene>
    <name evidence="1" type="primary">ubiC</name>
    <name type="ordered locus">SFV_4174</name>
</gene>
<organism>
    <name type="scientific">Shigella flexneri serotype 5b (strain 8401)</name>
    <dbReference type="NCBI Taxonomy" id="373384"/>
    <lineage>
        <taxon>Bacteria</taxon>
        <taxon>Pseudomonadati</taxon>
        <taxon>Pseudomonadota</taxon>
        <taxon>Gammaproteobacteria</taxon>
        <taxon>Enterobacterales</taxon>
        <taxon>Enterobacteriaceae</taxon>
        <taxon>Shigella</taxon>
    </lineage>
</organism>
<accession>Q0SXQ6</accession>
<protein>
    <recommendedName>
        <fullName evidence="1">Chorismate pyruvate-lyase</fullName>
        <shortName evidence="1">CL</shortName>
        <shortName evidence="1">CPL</shortName>
        <ecNumber evidence="1">4.1.3.40</ecNumber>
    </recommendedName>
</protein>